<accession>Q0ICF2</accession>
<comment type="function">
    <text evidence="1">Required for accurate and efficient protein synthesis under certain stress conditions. May act as a fidelity factor of the translation reaction, by catalyzing a one-codon backward translocation of tRNAs on improperly translocated ribosomes. Back-translocation proceeds from a post-translocation (POST) complex to a pre-translocation (PRE) complex, thus giving elongation factor G a second chance to translocate the tRNAs correctly. Binds to ribosomes in a GTP-dependent manner.</text>
</comment>
<comment type="catalytic activity">
    <reaction evidence="1">
        <text>GTP + H2O = GDP + phosphate + H(+)</text>
        <dbReference type="Rhea" id="RHEA:19669"/>
        <dbReference type="ChEBI" id="CHEBI:15377"/>
        <dbReference type="ChEBI" id="CHEBI:15378"/>
        <dbReference type="ChEBI" id="CHEBI:37565"/>
        <dbReference type="ChEBI" id="CHEBI:43474"/>
        <dbReference type="ChEBI" id="CHEBI:58189"/>
        <dbReference type="EC" id="3.6.5.n1"/>
    </reaction>
</comment>
<comment type="subcellular location">
    <subcellularLocation>
        <location evidence="1">Cell inner membrane</location>
        <topology evidence="1">Peripheral membrane protein</topology>
        <orientation evidence="1">Cytoplasmic side</orientation>
    </subcellularLocation>
</comment>
<comment type="similarity">
    <text evidence="1">Belongs to the TRAFAC class translation factor GTPase superfamily. Classic translation factor GTPase family. LepA subfamily.</text>
</comment>
<gene>
    <name evidence="1" type="primary">lepA</name>
    <name type="ordered locus">sync_0652</name>
</gene>
<evidence type="ECO:0000255" key="1">
    <source>
        <dbReference type="HAMAP-Rule" id="MF_00071"/>
    </source>
</evidence>
<feature type="chain" id="PRO_0000265714" description="Elongation factor 4">
    <location>
        <begin position="1"/>
        <end position="604"/>
    </location>
</feature>
<feature type="domain" description="tr-type G">
    <location>
        <begin position="7"/>
        <end position="189"/>
    </location>
</feature>
<feature type="binding site" evidence="1">
    <location>
        <begin position="19"/>
        <end position="24"/>
    </location>
    <ligand>
        <name>GTP</name>
        <dbReference type="ChEBI" id="CHEBI:37565"/>
    </ligand>
</feature>
<feature type="binding site" evidence="1">
    <location>
        <begin position="136"/>
        <end position="139"/>
    </location>
    <ligand>
        <name>GTP</name>
        <dbReference type="ChEBI" id="CHEBI:37565"/>
    </ligand>
</feature>
<proteinExistence type="inferred from homology"/>
<keyword id="KW-0997">Cell inner membrane</keyword>
<keyword id="KW-1003">Cell membrane</keyword>
<keyword id="KW-0342">GTP-binding</keyword>
<keyword id="KW-0378">Hydrolase</keyword>
<keyword id="KW-0472">Membrane</keyword>
<keyword id="KW-0547">Nucleotide-binding</keyword>
<keyword id="KW-0648">Protein biosynthesis</keyword>
<keyword id="KW-1185">Reference proteome</keyword>
<reference key="1">
    <citation type="journal article" date="2006" name="Proc. Natl. Acad. Sci. U.S.A.">
        <title>Genome sequence of Synechococcus CC9311: insights into adaptation to a coastal environment.</title>
        <authorList>
            <person name="Palenik B."/>
            <person name="Ren Q."/>
            <person name="Dupont C.L."/>
            <person name="Myers G.S."/>
            <person name="Heidelberg J.F."/>
            <person name="Badger J.H."/>
            <person name="Madupu R."/>
            <person name="Nelson W.C."/>
            <person name="Brinkac L.M."/>
            <person name="Dodson R.J."/>
            <person name="Durkin A.S."/>
            <person name="Daugherty S.C."/>
            <person name="Sullivan S.A."/>
            <person name="Khouri H."/>
            <person name="Mohamoud Y."/>
            <person name="Halpin R."/>
            <person name="Paulsen I.T."/>
        </authorList>
    </citation>
    <scope>NUCLEOTIDE SEQUENCE [LARGE SCALE GENOMIC DNA]</scope>
    <source>
        <strain>CC9311</strain>
    </source>
</reference>
<dbReference type="EC" id="3.6.5.n1" evidence="1"/>
<dbReference type="EMBL" id="CP000435">
    <property type="protein sequence ID" value="ABI45640.1"/>
    <property type="molecule type" value="Genomic_DNA"/>
</dbReference>
<dbReference type="RefSeq" id="WP_011618597.1">
    <property type="nucleotide sequence ID" value="NC_008319.1"/>
</dbReference>
<dbReference type="SMR" id="Q0ICF2"/>
<dbReference type="STRING" id="64471.sync_0652"/>
<dbReference type="KEGG" id="syg:sync_0652"/>
<dbReference type="eggNOG" id="COG0481">
    <property type="taxonomic scope" value="Bacteria"/>
</dbReference>
<dbReference type="HOGENOM" id="CLU_009995_3_3_3"/>
<dbReference type="OrthoDB" id="580826at2"/>
<dbReference type="Proteomes" id="UP000001961">
    <property type="component" value="Chromosome"/>
</dbReference>
<dbReference type="GO" id="GO:0005886">
    <property type="term" value="C:plasma membrane"/>
    <property type="evidence" value="ECO:0007669"/>
    <property type="project" value="UniProtKB-SubCell"/>
</dbReference>
<dbReference type="GO" id="GO:0005525">
    <property type="term" value="F:GTP binding"/>
    <property type="evidence" value="ECO:0007669"/>
    <property type="project" value="UniProtKB-KW"/>
</dbReference>
<dbReference type="GO" id="GO:0003924">
    <property type="term" value="F:GTPase activity"/>
    <property type="evidence" value="ECO:0007669"/>
    <property type="project" value="InterPro"/>
</dbReference>
<dbReference type="GO" id="GO:0043022">
    <property type="term" value="F:ribosome binding"/>
    <property type="evidence" value="ECO:0007669"/>
    <property type="project" value="TreeGrafter"/>
</dbReference>
<dbReference type="GO" id="GO:0045727">
    <property type="term" value="P:positive regulation of translation"/>
    <property type="evidence" value="ECO:0007669"/>
    <property type="project" value="TreeGrafter"/>
</dbReference>
<dbReference type="GO" id="GO:0006412">
    <property type="term" value="P:translation"/>
    <property type="evidence" value="ECO:0007669"/>
    <property type="project" value="UniProtKB-KW"/>
</dbReference>
<dbReference type="CDD" id="cd03699">
    <property type="entry name" value="EF4_II"/>
    <property type="match status" value="1"/>
</dbReference>
<dbReference type="CDD" id="cd16260">
    <property type="entry name" value="EF4_III"/>
    <property type="match status" value="1"/>
</dbReference>
<dbReference type="CDD" id="cd01890">
    <property type="entry name" value="LepA"/>
    <property type="match status" value="1"/>
</dbReference>
<dbReference type="CDD" id="cd03709">
    <property type="entry name" value="lepA_C"/>
    <property type="match status" value="1"/>
</dbReference>
<dbReference type="FunFam" id="3.40.50.300:FF:000078">
    <property type="entry name" value="Elongation factor 4"/>
    <property type="match status" value="1"/>
</dbReference>
<dbReference type="FunFam" id="2.40.30.10:FF:000015">
    <property type="entry name" value="Translation factor GUF1, mitochondrial"/>
    <property type="match status" value="1"/>
</dbReference>
<dbReference type="FunFam" id="3.30.70.240:FF:000007">
    <property type="entry name" value="Translation factor GUF1, mitochondrial"/>
    <property type="match status" value="1"/>
</dbReference>
<dbReference type="FunFam" id="3.30.70.2570:FF:000001">
    <property type="entry name" value="Translation factor GUF1, mitochondrial"/>
    <property type="match status" value="1"/>
</dbReference>
<dbReference type="FunFam" id="3.30.70.870:FF:000004">
    <property type="entry name" value="Translation factor GUF1, mitochondrial"/>
    <property type="match status" value="1"/>
</dbReference>
<dbReference type="Gene3D" id="3.30.70.240">
    <property type="match status" value="1"/>
</dbReference>
<dbReference type="Gene3D" id="3.30.70.2570">
    <property type="entry name" value="Elongation factor 4, C-terminal domain"/>
    <property type="match status" value="1"/>
</dbReference>
<dbReference type="Gene3D" id="3.30.70.870">
    <property type="entry name" value="Elongation Factor G (Translational Gtpase), domain 3"/>
    <property type="match status" value="1"/>
</dbReference>
<dbReference type="Gene3D" id="3.40.50.300">
    <property type="entry name" value="P-loop containing nucleotide triphosphate hydrolases"/>
    <property type="match status" value="1"/>
</dbReference>
<dbReference type="Gene3D" id="2.40.30.10">
    <property type="entry name" value="Translation factors"/>
    <property type="match status" value="1"/>
</dbReference>
<dbReference type="HAMAP" id="MF_03138">
    <property type="entry name" value="GUFP"/>
    <property type="match status" value="1"/>
</dbReference>
<dbReference type="HAMAP" id="MF_00071">
    <property type="entry name" value="LepA"/>
    <property type="match status" value="1"/>
</dbReference>
<dbReference type="InterPro" id="IPR006297">
    <property type="entry name" value="EF-4"/>
</dbReference>
<dbReference type="InterPro" id="IPR035647">
    <property type="entry name" value="EFG_III/V"/>
</dbReference>
<dbReference type="InterPro" id="IPR000640">
    <property type="entry name" value="EFG_V-like"/>
</dbReference>
<dbReference type="InterPro" id="IPR004161">
    <property type="entry name" value="EFTu-like_2"/>
</dbReference>
<dbReference type="InterPro" id="IPR031157">
    <property type="entry name" value="G_TR_CS"/>
</dbReference>
<dbReference type="InterPro" id="IPR027518">
    <property type="entry name" value="GUFP"/>
</dbReference>
<dbReference type="InterPro" id="IPR038363">
    <property type="entry name" value="LepA_C_sf"/>
</dbReference>
<dbReference type="InterPro" id="IPR013842">
    <property type="entry name" value="LepA_CTD"/>
</dbReference>
<dbReference type="InterPro" id="IPR035654">
    <property type="entry name" value="LepA_IV"/>
</dbReference>
<dbReference type="InterPro" id="IPR027417">
    <property type="entry name" value="P-loop_NTPase"/>
</dbReference>
<dbReference type="InterPro" id="IPR005225">
    <property type="entry name" value="Small_GTP-bd"/>
</dbReference>
<dbReference type="InterPro" id="IPR000795">
    <property type="entry name" value="T_Tr_GTP-bd_dom"/>
</dbReference>
<dbReference type="InterPro" id="IPR009000">
    <property type="entry name" value="Transl_B-barrel_sf"/>
</dbReference>
<dbReference type="NCBIfam" id="TIGR01393">
    <property type="entry name" value="lepA"/>
    <property type="match status" value="1"/>
</dbReference>
<dbReference type="NCBIfam" id="TIGR00231">
    <property type="entry name" value="small_GTP"/>
    <property type="match status" value="1"/>
</dbReference>
<dbReference type="PANTHER" id="PTHR43512:SF4">
    <property type="entry name" value="TRANSLATION FACTOR GUF1 HOMOLOG, CHLOROPLASTIC"/>
    <property type="match status" value="1"/>
</dbReference>
<dbReference type="PANTHER" id="PTHR43512">
    <property type="entry name" value="TRANSLATION FACTOR GUF1-RELATED"/>
    <property type="match status" value="1"/>
</dbReference>
<dbReference type="Pfam" id="PF00679">
    <property type="entry name" value="EFG_C"/>
    <property type="match status" value="1"/>
</dbReference>
<dbReference type="Pfam" id="PF00009">
    <property type="entry name" value="GTP_EFTU"/>
    <property type="match status" value="1"/>
</dbReference>
<dbReference type="Pfam" id="PF03144">
    <property type="entry name" value="GTP_EFTU_D2"/>
    <property type="match status" value="1"/>
</dbReference>
<dbReference type="Pfam" id="PF06421">
    <property type="entry name" value="LepA_C"/>
    <property type="match status" value="1"/>
</dbReference>
<dbReference type="PRINTS" id="PR00315">
    <property type="entry name" value="ELONGATNFCT"/>
</dbReference>
<dbReference type="SUPFAM" id="SSF54980">
    <property type="entry name" value="EF-G C-terminal domain-like"/>
    <property type="match status" value="2"/>
</dbReference>
<dbReference type="SUPFAM" id="SSF52540">
    <property type="entry name" value="P-loop containing nucleoside triphosphate hydrolases"/>
    <property type="match status" value="1"/>
</dbReference>
<dbReference type="SUPFAM" id="SSF50447">
    <property type="entry name" value="Translation proteins"/>
    <property type="match status" value="1"/>
</dbReference>
<dbReference type="PROSITE" id="PS00301">
    <property type="entry name" value="G_TR_1"/>
    <property type="match status" value="1"/>
</dbReference>
<dbReference type="PROSITE" id="PS51722">
    <property type="entry name" value="G_TR_2"/>
    <property type="match status" value="1"/>
</dbReference>
<organism>
    <name type="scientific">Synechococcus sp. (strain CC9311)</name>
    <dbReference type="NCBI Taxonomy" id="64471"/>
    <lineage>
        <taxon>Bacteria</taxon>
        <taxon>Bacillati</taxon>
        <taxon>Cyanobacteriota</taxon>
        <taxon>Cyanophyceae</taxon>
        <taxon>Synechococcales</taxon>
        <taxon>Synechococcaceae</taxon>
        <taxon>Synechococcus</taxon>
    </lineage>
</organism>
<name>LEPA_SYNS3</name>
<sequence>MTDAPVKRIRNFCIIAHIDHGKSTLADRLLQDTGTVANRDMQEQFLDNMELERERGITIKLQAARMKYKAADGEEYVLNLIDTPGHVDFSYEVSRSLQACEGALLVVDASQGVEAQTLANVYMALENDLEIIPVLNKIDLPGADPDRIKEEIEAIIGLDCSNAIPCSAKTGLGVPEILQSVVDRVPPPADTVKEPTKALIFDSYYDPYRGVIVYFRVMSGSISRKDKVLLMASNKTYELDEVGIMAPDEKKVDELHAGEVGYLAASIKAVADARVGDTITLLNEPADAPLPGYAEAKPMVFCGLFPTEADQYPDLREALHKLQLSDAALKFEPETSSAMGFGFRCGFLGLLHMEIVQERLEREYNLDLIVTAPSVIYNVNLTNGEQILVDNPATLPDPQQRESIEEPYVRMEIYAPNDFNGALMGLCQERRGEYLDMKYITKERVTLIYELPLAEVVTDFFDQMKTRTQGYASMEYHLIGYRKNELVRLDVLINAERADPLTTIVHRDKAYNVGKGLVEKLKELIPRQQFKIPLQASIGSRIIASTSISAIRKDVLAKCYGGDISRKKKLLKKQAKGKKRMKAMGKVDVPQEAFMAVLKLNQTP</sequence>
<protein>
    <recommendedName>
        <fullName evidence="1">Elongation factor 4</fullName>
        <shortName evidence="1">EF-4</shortName>
        <ecNumber evidence="1">3.6.5.n1</ecNumber>
    </recommendedName>
    <alternativeName>
        <fullName evidence="1">Ribosomal back-translocase LepA</fullName>
    </alternativeName>
</protein>